<gene>
    <name evidence="1" type="primary">kefF</name>
    <name type="ordered locus">EcE24377A_0050</name>
</gene>
<comment type="function">
    <text evidence="1">Regulatory subunit of a potassium efflux system that confers protection against electrophiles. Required for full activity of KefC. Shows redox enzymatic activity, but this enzymatic activity is not required for activation of KefC.</text>
</comment>
<comment type="catalytic activity">
    <reaction evidence="1">
        <text>a quinone + NADH + H(+) = a quinol + NAD(+)</text>
        <dbReference type="Rhea" id="RHEA:46160"/>
        <dbReference type="ChEBI" id="CHEBI:15378"/>
        <dbReference type="ChEBI" id="CHEBI:24646"/>
        <dbReference type="ChEBI" id="CHEBI:57540"/>
        <dbReference type="ChEBI" id="CHEBI:57945"/>
        <dbReference type="ChEBI" id="CHEBI:132124"/>
        <dbReference type="EC" id="1.6.5.2"/>
    </reaction>
</comment>
<comment type="catalytic activity">
    <reaction evidence="1">
        <text>a quinone + NADPH + H(+) = a quinol + NADP(+)</text>
        <dbReference type="Rhea" id="RHEA:46164"/>
        <dbReference type="ChEBI" id="CHEBI:15378"/>
        <dbReference type="ChEBI" id="CHEBI:24646"/>
        <dbReference type="ChEBI" id="CHEBI:57783"/>
        <dbReference type="ChEBI" id="CHEBI:58349"/>
        <dbReference type="ChEBI" id="CHEBI:132124"/>
        <dbReference type="EC" id="1.6.5.2"/>
    </reaction>
</comment>
<comment type="cofactor">
    <cofactor evidence="1">
        <name>FMN</name>
        <dbReference type="ChEBI" id="CHEBI:58210"/>
    </cofactor>
</comment>
<comment type="subunit">
    <text evidence="1">Homodimer. Interacts with KefC.</text>
</comment>
<comment type="subcellular location">
    <subcellularLocation>
        <location evidence="1">Cell inner membrane</location>
        <topology evidence="1">Peripheral membrane protein</topology>
        <orientation evidence="1">Cytoplasmic side</orientation>
    </subcellularLocation>
</comment>
<comment type="similarity">
    <text evidence="1">Belongs to the NAD(P)H dehydrogenase (quinone) family. KefF subfamily.</text>
</comment>
<feature type="chain" id="PRO_1000068463" description="Glutathione-regulated potassium-efflux system ancillary protein KefF">
    <location>
        <begin position="1"/>
        <end position="176"/>
    </location>
</feature>
<feature type="binding site" evidence="1">
    <location>
        <position position="8"/>
    </location>
    <ligand>
        <name>FMN</name>
        <dbReference type="ChEBI" id="CHEBI:58210"/>
    </ligand>
</feature>
<feature type="binding site" evidence="1">
    <location>
        <begin position="14"/>
        <end position="17"/>
    </location>
    <ligand>
        <name>FMN</name>
        <dbReference type="ChEBI" id="CHEBI:58210"/>
    </ligand>
</feature>
<feature type="binding site" evidence="1">
    <location>
        <begin position="65"/>
        <end position="68"/>
    </location>
    <ligand>
        <name>FMN</name>
        <dbReference type="ChEBI" id="CHEBI:58210"/>
    </ligand>
</feature>
<feature type="binding site" evidence="1">
    <location>
        <begin position="105"/>
        <end position="108"/>
    </location>
    <ligand>
        <name>FMN</name>
        <dbReference type="ChEBI" id="CHEBI:58210"/>
    </ligand>
</feature>
<reference key="1">
    <citation type="journal article" date="2008" name="J. Bacteriol.">
        <title>The pangenome structure of Escherichia coli: comparative genomic analysis of E. coli commensal and pathogenic isolates.</title>
        <authorList>
            <person name="Rasko D.A."/>
            <person name="Rosovitz M.J."/>
            <person name="Myers G.S.A."/>
            <person name="Mongodin E.F."/>
            <person name="Fricke W.F."/>
            <person name="Gajer P."/>
            <person name="Crabtree J."/>
            <person name="Sebaihia M."/>
            <person name="Thomson N.R."/>
            <person name="Chaudhuri R."/>
            <person name="Henderson I.R."/>
            <person name="Sperandio V."/>
            <person name="Ravel J."/>
        </authorList>
    </citation>
    <scope>NUCLEOTIDE SEQUENCE [LARGE SCALE GENOMIC DNA]</scope>
    <source>
        <strain>E24377A / ETEC</strain>
    </source>
</reference>
<protein>
    <recommendedName>
        <fullName evidence="1">Glutathione-regulated potassium-efflux system ancillary protein KefF</fullName>
    </recommendedName>
    <alternativeName>
        <fullName evidence="1">Quinone oxidoreductase KefF</fullName>
        <ecNumber evidence="1">1.6.5.2</ecNumber>
    </alternativeName>
</protein>
<name>KEFF_ECO24</name>
<sequence>MILIIYAHPYPHHSHANKRMLEQARTLEGVEIRSLYQLYPDFNIDIAAEQEALSRADLIVWQHPMQWYSIPPLLKLWIDKVFSHGWAYGHGGTALHGKHLLWAVTTGGGESHFEIGAHPGFDVLSQPLQATAIYCGLNWLPPFAMHCTFICDDETLEGQARHYKQRLLEWQEAHHG</sequence>
<accession>A7ZHD9</accession>
<evidence type="ECO:0000255" key="1">
    <source>
        <dbReference type="HAMAP-Rule" id="MF_01414"/>
    </source>
</evidence>
<dbReference type="EC" id="1.6.5.2" evidence="1"/>
<dbReference type="EMBL" id="CP000800">
    <property type="protein sequence ID" value="ABV16747.1"/>
    <property type="molecule type" value="Genomic_DNA"/>
</dbReference>
<dbReference type="RefSeq" id="WP_000600725.1">
    <property type="nucleotide sequence ID" value="NC_009801.1"/>
</dbReference>
<dbReference type="SMR" id="A7ZHD9"/>
<dbReference type="GeneID" id="89519427"/>
<dbReference type="KEGG" id="ecw:EcE24377A_0050"/>
<dbReference type="HOGENOM" id="CLU_058643_0_2_6"/>
<dbReference type="Proteomes" id="UP000001122">
    <property type="component" value="Chromosome"/>
</dbReference>
<dbReference type="GO" id="GO:0005886">
    <property type="term" value="C:plasma membrane"/>
    <property type="evidence" value="ECO:0007669"/>
    <property type="project" value="UniProtKB-SubCell"/>
</dbReference>
<dbReference type="GO" id="GO:0009055">
    <property type="term" value="F:electron transfer activity"/>
    <property type="evidence" value="ECO:0007669"/>
    <property type="project" value="TreeGrafter"/>
</dbReference>
<dbReference type="GO" id="GO:0010181">
    <property type="term" value="F:FMN binding"/>
    <property type="evidence" value="ECO:0007669"/>
    <property type="project" value="UniProtKB-UniRule"/>
</dbReference>
<dbReference type="GO" id="GO:0050136">
    <property type="term" value="F:NADH:ubiquinone reductase (non-electrogenic) activity"/>
    <property type="evidence" value="ECO:0007669"/>
    <property type="project" value="RHEA"/>
</dbReference>
<dbReference type="GO" id="GO:0008753">
    <property type="term" value="F:NADPH dehydrogenase (quinone) activity"/>
    <property type="evidence" value="ECO:0007669"/>
    <property type="project" value="RHEA"/>
</dbReference>
<dbReference type="GO" id="GO:1901381">
    <property type="term" value="P:positive regulation of potassium ion transmembrane transport"/>
    <property type="evidence" value="ECO:0007669"/>
    <property type="project" value="UniProtKB-UniRule"/>
</dbReference>
<dbReference type="GO" id="GO:0006813">
    <property type="term" value="P:potassium ion transport"/>
    <property type="evidence" value="ECO:0007669"/>
    <property type="project" value="InterPro"/>
</dbReference>
<dbReference type="FunFam" id="3.40.50.360:FF:000008">
    <property type="entry name" value="Glutathione-regulated potassium-efflux system ancillary protein KefF"/>
    <property type="match status" value="1"/>
</dbReference>
<dbReference type="Gene3D" id="3.40.50.360">
    <property type="match status" value="1"/>
</dbReference>
<dbReference type="HAMAP" id="MF_01414">
    <property type="entry name" value="K_H_efflux_KefF"/>
    <property type="match status" value="1"/>
</dbReference>
<dbReference type="InterPro" id="IPR003680">
    <property type="entry name" value="Flavodoxin_fold"/>
</dbReference>
<dbReference type="InterPro" id="IPR029039">
    <property type="entry name" value="Flavoprotein-like_sf"/>
</dbReference>
<dbReference type="InterPro" id="IPR023948">
    <property type="entry name" value="K_H_efflux_KefF"/>
</dbReference>
<dbReference type="InterPro" id="IPR046980">
    <property type="entry name" value="KefG/KefF"/>
</dbReference>
<dbReference type="NCBIfam" id="NF002044">
    <property type="entry name" value="PRK00871.1"/>
    <property type="match status" value="1"/>
</dbReference>
<dbReference type="PANTHER" id="PTHR47307:SF2">
    <property type="entry name" value="GLUTATHIONE-REGULATED POTASSIUM-EFFLUX SYSTEM ANCILLARY PROTEIN KEFF"/>
    <property type="match status" value="1"/>
</dbReference>
<dbReference type="PANTHER" id="PTHR47307">
    <property type="entry name" value="GLUTATHIONE-REGULATED POTASSIUM-EFFLUX SYSTEM ANCILLARY PROTEIN KEFG"/>
    <property type="match status" value="1"/>
</dbReference>
<dbReference type="Pfam" id="PF02525">
    <property type="entry name" value="Flavodoxin_2"/>
    <property type="match status" value="1"/>
</dbReference>
<dbReference type="SUPFAM" id="SSF52218">
    <property type="entry name" value="Flavoproteins"/>
    <property type="match status" value="1"/>
</dbReference>
<proteinExistence type="inferred from homology"/>
<organism>
    <name type="scientific">Escherichia coli O139:H28 (strain E24377A / ETEC)</name>
    <dbReference type="NCBI Taxonomy" id="331111"/>
    <lineage>
        <taxon>Bacteria</taxon>
        <taxon>Pseudomonadati</taxon>
        <taxon>Pseudomonadota</taxon>
        <taxon>Gammaproteobacteria</taxon>
        <taxon>Enterobacterales</taxon>
        <taxon>Enterobacteriaceae</taxon>
        <taxon>Escherichia</taxon>
    </lineage>
</organism>
<keyword id="KW-0997">Cell inner membrane</keyword>
<keyword id="KW-1003">Cell membrane</keyword>
<keyword id="KW-0285">Flavoprotein</keyword>
<keyword id="KW-0288">FMN</keyword>
<keyword id="KW-0472">Membrane</keyword>
<keyword id="KW-0520">NAD</keyword>
<keyword id="KW-0560">Oxidoreductase</keyword>
<keyword id="KW-1185">Reference proteome</keyword>